<sequence>MKYTATFALLILAIGIQTQRRSTICRCRQEDACWPTTAEWSSLNQSIDGKLRHLRPVGLPCQQSAYHKEKCDEVLAMTHNSSWRVDHPESLQLVSWESWPEKNQSCQIVREAVDGCAQGRIPLYSAAVESTKQVQQAVSFAKHRNLRLVVRNTGHDMAGRSSAPGSLQILTSGLKGINYTENFVPFITQGSAEPMGPAVTIGAGILTGELYATGSEKGFVVLGGACSTVGIAGGFIQSGGMGILSPSKGLGSDHVLQVEIVTADGSHIIANQYQNEDLFWAVRGGGGGTFGVITSVTLRAFADLPATVTGIQINTPSADAIFWAGVKTVLSILPELTDAGNSARMIVLPASSTGGASASFEGYTFNKKGAVSLLALQRALDDFGIPFKLSHDFQGNLSRFLAAPKGVDLAGISVIPGSVFLSYDLVASKDGPAKVTSALSDLRLGPGSSFSVDAFGGGQVVNNKNRINSAVHPDWRSALLSLTVGRGVPPGYTLETLKSIESELENDQLPRLRSLEGGRKGAYLAVAYPNEVYFQDSFWGKNYDRLLKVKRAWDPEDLFITRVGVGSERWDDEGMCTRADSGLWHALARF</sequence>
<gene>
    <name evidence="11" type="primary">malF</name>
</gene>
<comment type="function">
    <text evidence="7 9 10">FAD-linked oxidoreductase; part of the gene cluster that mediates the biosynthesis of malbrancheamide, a dichlorinated fungal indole alkaloid that belongs to a family of natural products containing a characteristic bicyclo[2.2.2]diazaoctane core (PubMed:23213353, PubMed:28777910, PubMed:31548667). The first step of malbrancheamide biosynthesis involves coupling of L-proline and L-tryptophan by malG, a bimodular NRPS, to produce L-Pro-L-Trp aldehyde through reductive offloading (PubMed:23213353, PubMed:31548667). This compound undergoes spontaneous cyclization and dehydration to give a dienamine which is reverse prenylated at C-2 by malE (PubMed:31548667). The other prenyltransferase present in the cluster, malB, displays modest activity, suggesting that may be a redundant gene in the pathway (PubMed:31548667). Subsequently, a [4+2] Diels-Alder cyclo-addition catalyzed by the bifunctional enzyme malC forms the characteristic bicyclo[2.2.2]diazaoctane ring of premalbrancheamid (PubMed:31548667). Finally, the flavin-dependent halogenase malA catalyzes the iterative dichlorination of the indole ring of premalbrancheamide to yield C-9 monochlorinated malbrancheamide B, C-8 monochlorinated isomalbrancheamide B, and dichlorinated malbrancheamide (PubMed:28777910, PubMed:31548667). MalA is also able to brominate premalbrancheamide at C-9 to yield malbrancheamide C, and, to a lesser extend, at C-8 to yield isomalbrancheamide C (PubMed:28777910). Finally, malA can brominate C-9 monochlorinated malbrancheamide B at C-8 to yield malbrancheamide D, or C-8 monochlorinated isomalbrancheamide B at C-9 to produce isomalbrancheamide D (PubMed:28777910).</text>
</comment>
<comment type="cofactor">
    <cofactor evidence="12">
        <name>FAD</name>
        <dbReference type="ChEBI" id="CHEBI:57692"/>
    </cofactor>
</comment>
<comment type="biotechnology">
    <text evidence="4 5 6 8">Malbrancheamides have the ability to inhibit calmodulin, calmodulin-dependent phosphodiesterase (PDE1), and induce both endothelium-independent and endothelium-dependent relaxant effects, suggesting their potential as vasorelaxant agents.</text>
</comment>
<comment type="similarity">
    <text evidence="12">Belongs to the oxygen-dependent FAD-linked oxidoreductase family.</text>
</comment>
<proteinExistence type="evidence at protein level"/>
<dbReference type="EC" id="1.-.-.-" evidence="12"/>
<dbReference type="EMBL" id="JQ708193">
    <property type="protein sequence ID" value="AGA37266.1"/>
    <property type="molecule type" value="Genomic_DNA"/>
</dbReference>
<dbReference type="SMR" id="L0E159"/>
<dbReference type="GlyCosmos" id="L0E159">
    <property type="glycosylation" value="5 sites, No reported glycans"/>
</dbReference>
<dbReference type="GO" id="GO:0071949">
    <property type="term" value="F:FAD binding"/>
    <property type="evidence" value="ECO:0007669"/>
    <property type="project" value="InterPro"/>
</dbReference>
<dbReference type="GO" id="GO:0016491">
    <property type="term" value="F:oxidoreductase activity"/>
    <property type="evidence" value="ECO:0007669"/>
    <property type="project" value="UniProtKB-KW"/>
</dbReference>
<dbReference type="Gene3D" id="3.30.465.10">
    <property type="match status" value="2"/>
</dbReference>
<dbReference type="InterPro" id="IPR012951">
    <property type="entry name" value="BBE"/>
</dbReference>
<dbReference type="InterPro" id="IPR016166">
    <property type="entry name" value="FAD-bd_PCMH"/>
</dbReference>
<dbReference type="InterPro" id="IPR036318">
    <property type="entry name" value="FAD-bd_PCMH-like_sf"/>
</dbReference>
<dbReference type="InterPro" id="IPR016169">
    <property type="entry name" value="FAD-bd_PCMH_sub2"/>
</dbReference>
<dbReference type="InterPro" id="IPR050416">
    <property type="entry name" value="FAD-linked_Oxidoreductase"/>
</dbReference>
<dbReference type="InterPro" id="IPR006094">
    <property type="entry name" value="Oxid_FAD_bind_N"/>
</dbReference>
<dbReference type="PANTHER" id="PTHR42973">
    <property type="entry name" value="BINDING OXIDOREDUCTASE, PUTATIVE (AFU_ORTHOLOGUE AFUA_1G17690)-RELATED"/>
    <property type="match status" value="1"/>
</dbReference>
<dbReference type="PANTHER" id="PTHR42973:SF39">
    <property type="entry name" value="FAD-BINDING PCMH-TYPE DOMAIN-CONTAINING PROTEIN"/>
    <property type="match status" value="1"/>
</dbReference>
<dbReference type="Pfam" id="PF08031">
    <property type="entry name" value="BBE"/>
    <property type="match status" value="1"/>
</dbReference>
<dbReference type="Pfam" id="PF01565">
    <property type="entry name" value="FAD_binding_4"/>
    <property type="match status" value="1"/>
</dbReference>
<dbReference type="SUPFAM" id="SSF56176">
    <property type="entry name" value="FAD-binding/transporter-associated domain-like"/>
    <property type="match status" value="1"/>
</dbReference>
<dbReference type="PROSITE" id="PS51387">
    <property type="entry name" value="FAD_PCMH"/>
    <property type="match status" value="1"/>
</dbReference>
<accession>L0E159</accession>
<feature type="signal peptide" evidence="1">
    <location>
        <begin position="1"/>
        <end position="18"/>
    </location>
</feature>
<feature type="chain" id="PRO_5003940680" description="FAD-linked oxidoreductase malF">
    <location>
        <begin position="19"/>
        <end position="590"/>
    </location>
</feature>
<feature type="domain" description="FAD-binding PCMH-type" evidence="3">
    <location>
        <begin position="117"/>
        <end position="303"/>
    </location>
</feature>
<feature type="glycosylation site" description="N-linked (GlcNAc...) asparagine" evidence="2">
    <location>
        <position position="44"/>
    </location>
</feature>
<feature type="glycosylation site" description="N-linked (GlcNAc...) asparagine" evidence="2">
    <location>
        <position position="80"/>
    </location>
</feature>
<feature type="glycosylation site" description="N-linked (GlcNAc...) asparagine" evidence="2">
    <location>
        <position position="103"/>
    </location>
</feature>
<feature type="glycosylation site" description="N-linked (GlcNAc...) asparagine" evidence="2">
    <location>
        <position position="178"/>
    </location>
</feature>
<feature type="glycosylation site" description="N-linked (GlcNAc...) asparagine" evidence="2">
    <location>
        <position position="396"/>
    </location>
</feature>
<organism>
    <name type="scientific">Malbranchea aurantiaca</name>
    <dbReference type="NCBI Taxonomy" id="78605"/>
    <lineage>
        <taxon>Eukaryota</taxon>
        <taxon>Fungi</taxon>
        <taxon>Dikarya</taxon>
        <taxon>Ascomycota</taxon>
        <taxon>Pezizomycotina</taxon>
        <taxon>Eurotiomycetes</taxon>
        <taxon>Eurotiomycetidae</taxon>
        <taxon>Onygenales</taxon>
        <taxon>Malbrancheaceae</taxon>
        <taxon>Malbranchea</taxon>
    </lineage>
</organism>
<evidence type="ECO:0000255" key="1"/>
<evidence type="ECO:0000255" key="2">
    <source>
        <dbReference type="PROSITE-ProRule" id="PRU00498"/>
    </source>
</evidence>
<evidence type="ECO:0000255" key="3">
    <source>
        <dbReference type="PROSITE-ProRule" id="PRU00718"/>
    </source>
</evidence>
<evidence type="ECO:0000269" key="4">
    <source>
    </source>
</evidence>
<evidence type="ECO:0000269" key="5">
    <source>
    </source>
</evidence>
<evidence type="ECO:0000269" key="6">
    <source>
    </source>
</evidence>
<evidence type="ECO:0000269" key="7">
    <source>
    </source>
</evidence>
<evidence type="ECO:0000269" key="8">
    <source>
    </source>
</evidence>
<evidence type="ECO:0000269" key="9">
    <source>
    </source>
</evidence>
<evidence type="ECO:0000269" key="10">
    <source>
    </source>
</evidence>
<evidence type="ECO:0000303" key="11">
    <source>
    </source>
</evidence>
<evidence type="ECO:0000305" key="12"/>
<name>MALF_MALAU</name>
<reference key="1">
    <citation type="journal article" date="2012" name="Med. Chem. Commun.">
        <title>Comparative analysis of the biosynthetic systems for fungal bicyclo[2.2.2]diazaoctane indole alkaloids: the (+)/(-)-notoamide, paraherquamide and malbrancheamide pathways.</title>
        <authorList>
            <person name="Li S."/>
            <person name="Anand K."/>
            <person name="Tran H."/>
            <person name="Yu F."/>
            <person name="Finefield J.M."/>
            <person name="Sunderhaus J.D."/>
            <person name="McAfoos T.J."/>
            <person name="Tsukamoto S."/>
            <person name="Williams R.M."/>
            <person name="Sherman D.H."/>
        </authorList>
    </citation>
    <scope>NUCLEOTIDE SEQUENCE [GENOMIC DNA]</scope>
    <scope>FUNCTION</scope>
    <source>
        <strain>RRC1813</strain>
    </source>
</reference>
<reference key="2">
    <citation type="journal article" date="2008" name="Bioorg. Med. Chem. Lett.">
        <title>Calmodulin inhibitory activity of the malbrancheamides and various analogs.</title>
        <authorList>
            <person name="Miller K.A."/>
            <person name="Figueroa M."/>
            <person name="Valente M.W."/>
            <person name="Greshock T.J."/>
            <person name="Mata R."/>
            <person name="Williams R.M."/>
        </authorList>
    </citation>
    <scope>BIOTECHNOLOGY</scope>
</reference>
<reference key="3">
    <citation type="journal article" date="2009" name="Anal. Biochem.">
        <title>An alternative assay to discover potential calmodulin inhibitors using a human fluorophore-labeled CaM protein.</title>
        <authorList>
            <person name="Gonzalez-Andrade M."/>
            <person name="Figueroa M."/>
            <person name="Rodriguez-Sotres R."/>
            <person name="Mata R."/>
            <person name="Sosa-Peinado A."/>
        </authorList>
    </citation>
    <scope>BIOTECHNOLOGY</scope>
</reference>
<reference key="4">
    <citation type="journal article" date="2011" name="J. Enzym. Inhib. Med. Chem.">
        <title>Fluorescence, circular dichroism, NMR, and docking studies of the interaction of the alkaloid malbrancheamide with calmodulin.</title>
        <authorList>
            <person name="Figueroa M."/>
            <person name="Gonzalez-Andrade M."/>
            <person name="Sosa-Peinado A."/>
            <person name="Madariaga-Mazon A."/>
            <person name="Del Rio-Portilla F."/>
            <person name="Gonzalez M.C."/>
            <person name="Mata R."/>
        </authorList>
    </citation>
    <scope>BIOTECHNOLOGY</scope>
</reference>
<reference key="5">
    <citation type="journal article" date="2015" name="J. Pharm. Pharmacol.">
        <title>Insights on the vasorelaxant mode of action of malbrancheamide.</title>
        <authorList>
            <person name="Madariaga-Mazon A."/>
            <person name="Hernandez-Abreu O."/>
            <person name="Estrada-Soto S."/>
            <person name="Mata R."/>
        </authorList>
    </citation>
    <scope>BIOTECHNOLOGY</scope>
</reference>
<reference key="6">
    <citation type="journal article" date="2017" name="J. Am. Chem. Soc.">
        <title>Function and structure of MalA/MalA', iterative halogenases for late-stage C-H functionalization of indole alkaloids.</title>
        <authorList>
            <person name="Fraley A.E."/>
            <person name="Garcia-Borras M."/>
            <person name="Tripathi A."/>
            <person name="Khare D."/>
            <person name="Mercado-Marin E.V."/>
            <person name="Tran H."/>
            <person name="Dan Q."/>
            <person name="Webb G.P."/>
            <person name="Watts K.R."/>
            <person name="Crews P."/>
            <person name="Sarpong R."/>
            <person name="Williams R.M."/>
            <person name="Smith J.L."/>
            <person name="Houk K.N."/>
            <person name="Sherman D.H."/>
        </authorList>
    </citation>
    <scope>FUNCTION</scope>
</reference>
<reference key="7">
    <citation type="journal article" date="2019" name="Nat. Chem.">
        <title>Fungal indole alkaloid biogenesis through evolution of a bifunctional reductase/Diels-Alderase.</title>
        <authorList>
            <person name="Dan Q."/>
            <person name="Newmister S.A."/>
            <person name="Klas K.R."/>
            <person name="Fraley A.E."/>
            <person name="McAfoos T.J."/>
            <person name="Somoza A.D."/>
            <person name="Sunderhaus J.D."/>
            <person name="Ye Y."/>
            <person name="Shende V.V."/>
            <person name="Yu F."/>
            <person name="Sanders J.N."/>
            <person name="Brown W.C."/>
            <person name="Zhao L."/>
            <person name="Paton R.S."/>
            <person name="Houk K.N."/>
            <person name="Smith J.L."/>
            <person name="Sherman D.H."/>
            <person name="Williams R.M."/>
        </authorList>
    </citation>
    <scope>FUNCTION</scope>
</reference>
<keyword id="KW-0274">FAD</keyword>
<keyword id="KW-0285">Flavoprotein</keyword>
<keyword id="KW-0325">Glycoprotein</keyword>
<keyword id="KW-0560">Oxidoreductase</keyword>
<keyword id="KW-0732">Signal</keyword>
<protein>
    <recommendedName>
        <fullName evidence="11">FAD-linked oxidoreductase malF</fullName>
        <ecNumber evidence="12">1.-.-.-</ecNumber>
    </recommendedName>
    <alternativeName>
        <fullName evidence="11">Malbrancheamide biosynthesis cluster protein F</fullName>
    </alternativeName>
</protein>